<sequence length="576" mass="63679">MEARGKVVGVIGNLVTIEIVGTVSMNEIVFIKTGGRSLKAEIIRIRDGEVDAQVFEMTKGIAVGDDIEFTDKLLTVELGPGLLSQVYDGLQNPLSELAAQCGFFLERGLYLSALDRSKKWSFNATAKVGDIVVAGDYLGFVVEGTIKHKIMVPFYRKDSYKIVEIVSDGNYTVDDKIAVIENDAGGRHVITMSFHWPVKVPITSYKDRLIPSEPMVTQTRIIDTFFPVAKGGTFCIPGPFGAGKTVLQQVTSRNADVDVVIIAACGERAGEVVETLKEFPELIDPRTGKSLMDRTCIICNTSSMPVAAREASVYTAITIGEYYRQMGLDILLLADSTSRWAQAMREMSGRLEEIPGEEAFPAYLESVIASFYERAGIVVLNDGNVGSVTVGGSVSPAGGNFEEPVTQATLKVVGAFHGLTRERSDARKFPAINPLESWSKYRGVVESEKTGYARSFLAKGNEINQMMKVVGEEGISIGDFLVYLKSELLDACYLQQNSFDSVDTAVSPERQNYMFDILYDILQSDFKFENKLEARSFVNELRQNILDMNLNPFKEEKFNKLENTLKDLVRSKKLDF</sequence>
<reference key="1">
    <citation type="submission" date="2004-12" db="EMBL/GenBank/DDBJ databases">
        <title>The genome sequence of Borrelia hermsii and Borrelia turicatae: comparative analysis of two agents of endemic N. America relapsing fever.</title>
        <authorList>
            <person name="Porcella S.F."/>
            <person name="Raffel S.J."/>
            <person name="Schrumpf M.E."/>
            <person name="Montgomery B."/>
            <person name="Smith T."/>
            <person name="Schwan T.G."/>
        </authorList>
    </citation>
    <scope>NUCLEOTIDE SEQUENCE [LARGE SCALE GENOMIC DNA]</scope>
    <source>
        <strain>91E135</strain>
    </source>
</reference>
<protein>
    <recommendedName>
        <fullName evidence="1">V-type ATP synthase alpha chain</fullName>
        <ecNumber evidence="1">7.1.2.2</ecNumber>
    </recommendedName>
    <alternativeName>
        <fullName evidence="1">V-ATPase subunit A</fullName>
    </alternativeName>
</protein>
<name>VATA_BORT9</name>
<dbReference type="EC" id="7.1.2.2" evidence="1"/>
<dbReference type="EMBL" id="CP000049">
    <property type="protein sequence ID" value="AAX17435.1"/>
    <property type="molecule type" value="Genomic_DNA"/>
</dbReference>
<dbReference type="RefSeq" id="WP_011772054.1">
    <property type="nucleotide sequence ID" value="NZ_CP073176.1"/>
</dbReference>
<dbReference type="SMR" id="A1QYP3"/>
<dbReference type="KEGG" id="btu:BT0094"/>
<dbReference type="eggNOG" id="COG1155">
    <property type="taxonomic scope" value="Bacteria"/>
</dbReference>
<dbReference type="HOGENOM" id="CLU_008162_1_1_12"/>
<dbReference type="Proteomes" id="UP000001205">
    <property type="component" value="Chromosome"/>
</dbReference>
<dbReference type="GO" id="GO:0005524">
    <property type="term" value="F:ATP binding"/>
    <property type="evidence" value="ECO:0007669"/>
    <property type="project" value="UniProtKB-UniRule"/>
</dbReference>
<dbReference type="GO" id="GO:0046933">
    <property type="term" value="F:proton-transporting ATP synthase activity, rotational mechanism"/>
    <property type="evidence" value="ECO:0007669"/>
    <property type="project" value="UniProtKB-UniRule"/>
</dbReference>
<dbReference type="GO" id="GO:0046961">
    <property type="term" value="F:proton-transporting ATPase activity, rotational mechanism"/>
    <property type="evidence" value="ECO:0007669"/>
    <property type="project" value="InterPro"/>
</dbReference>
<dbReference type="GO" id="GO:0042777">
    <property type="term" value="P:proton motive force-driven plasma membrane ATP synthesis"/>
    <property type="evidence" value="ECO:0007669"/>
    <property type="project" value="UniProtKB-UniRule"/>
</dbReference>
<dbReference type="CDD" id="cd01426">
    <property type="entry name" value="ATP-synt_F1_V1_A1_AB_FliI_N"/>
    <property type="match status" value="1"/>
</dbReference>
<dbReference type="CDD" id="cd18111">
    <property type="entry name" value="ATP-synt_V_A-type_alpha_C"/>
    <property type="match status" value="1"/>
</dbReference>
<dbReference type="CDD" id="cd01134">
    <property type="entry name" value="V_A-ATPase_A"/>
    <property type="match status" value="1"/>
</dbReference>
<dbReference type="Gene3D" id="2.40.30.20">
    <property type="match status" value="1"/>
</dbReference>
<dbReference type="Gene3D" id="2.40.50.100">
    <property type="match status" value="1"/>
</dbReference>
<dbReference type="Gene3D" id="1.10.1140.10">
    <property type="entry name" value="Bovine Mitochondrial F1-atpase, Atp Synthase Beta Chain, Chain D, domain 3"/>
    <property type="match status" value="1"/>
</dbReference>
<dbReference type="Gene3D" id="3.40.50.300">
    <property type="entry name" value="P-loop containing nucleotide triphosphate hydrolases"/>
    <property type="match status" value="1"/>
</dbReference>
<dbReference type="HAMAP" id="MF_00309">
    <property type="entry name" value="ATP_synth_A_arch"/>
    <property type="match status" value="1"/>
</dbReference>
<dbReference type="InterPro" id="IPR055190">
    <property type="entry name" value="ATP-synt_VA_C"/>
</dbReference>
<dbReference type="InterPro" id="IPR031686">
    <property type="entry name" value="ATP-synth_a_Xtn"/>
</dbReference>
<dbReference type="InterPro" id="IPR023366">
    <property type="entry name" value="ATP_synth_asu-like_sf"/>
</dbReference>
<dbReference type="InterPro" id="IPR020003">
    <property type="entry name" value="ATPase_a/bsu_AS"/>
</dbReference>
<dbReference type="InterPro" id="IPR004100">
    <property type="entry name" value="ATPase_F1/V1/A1_a/bsu_N"/>
</dbReference>
<dbReference type="InterPro" id="IPR000194">
    <property type="entry name" value="ATPase_F1/V1/A1_a/bsu_nucl-bd"/>
</dbReference>
<dbReference type="InterPro" id="IPR024034">
    <property type="entry name" value="ATPase_F1/V1_b/a_C"/>
</dbReference>
<dbReference type="InterPro" id="IPR027417">
    <property type="entry name" value="P-loop_NTPase"/>
</dbReference>
<dbReference type="InterPro" id="IPR022878">
    <property type="entry name" value="V-ATPase_asu"/>
</dbReference>
<dbReference type="NCBIfam" id="NF003220">
    <property type="entry name" value="PRK04192.1"/>
    <property type="match status" value="1"/>
</dbReference>
<dbReference type="PANTHER" id="PTHR43607:SF1">
    <property type="entry name" value="H(+)-TRANSPORTING TWO-SECTOR ATPASE"/>
    <property type="match status" value="1"/>
</dbReference>
<dbReference type="PANTHER" id="PTHR43607">
    <property type="entry name" value="V-TYPE PROTON ATPASE CATALYTIC SUBUNIT A"/>
    <property type="match status" value="1"/>
</dbReference>
<dbReference type="Pfam" id="PF00006">
    <property type="entry name" value="ATP-synt_ab"/>
    <property type="match status" value="1"/>
</dbReference>
<dbReference type="Pfam" id="PF02874">
    <property type="entry name" value="ATP-synt_ab_N"/>
    <property type="match status" value="1"/>
</dbReference>
<dbReference type="Pfam" id="PF16886">
    <property type="entry name" value="ATP-synt_ab_Xtn"/>
    <property type="match status" value="1"/>
</dbReference>
<dbReference type="Pfam" id="PF22919">
    <property type="entry name" value="ATP-synt_VA_C"/>
    <property type="match status" value="1"/>
</dbReference>
<dbReference type="SUPFAM" id="SSF52540">
    <property type="entry name" value="P-loop containing nucleoside triphosphate hydrolases"/>
    <property type="match status" value="1"/>
</dbReference>
<dbReference type="PROSITE" id="PS00152">
    <property type="entry name" value="ATPASE_ALPHA_BETA"/>
    <property type="match status" value="1"/>
</dbReference>
<proteinExistence type="inferred from homology"/>
<keyword id="KW-0066">ATP synthesis</keyword>
<keyword id="KW-0067">ATP-binding</keyword>
<keyword id="KW-0375">Hydrogen ion transport</keyword>
<keyword id="KW-0406">Ion transport</keyword>
<keyword id="KW-0547">Nucleotide-binding</keyword>
<keyword id="KW-1185">Reference proteome</keyword>
<keyword id="KW-1278">Translocase</keyword>
<keyword id="KW-0813">Transport</keyword>
<evidence type="ECO:0000255" key="1">
    <source>
        <dbReference type="HAMAP-Rule" id="MF_00309"/>
    </source>
</evidence>
<comment type="function">
    <text evidence="1">Produces ATP from ADP in the presence of a proton gradient across the membrane. The V-type alpha chain is a catalytic subunit.</text>
</comment>
<comment type="catalytic activity">
    <reaction evidence="1">
        <text>ATP + H2O + 4 H(+)(in) = ADP + phosphate + 5 H(+)(out)</text>
        <dbReference type="Rhea" id="RHEA:57720"/>
        <dbReference type="ChEBI" id="CHEBI:15377"/>
        <dbReference type="ChEBI" id="CHEBI:15378"/>
        <dbReference type="ChEBI" id="CHEBI:30616"/>
        <dbReference type="ChEBI" id="CHEBI:43474"/>
        <dbReference type="ChEBI" id="CHEBI:456216"/>
        <dbReference type="EC" id="7.1.2.2"/>
    </reaction>
</comment>
<comment type="similarity">
    <text evidence="1">Belongs to the ATPase alpha/beta chains family.</text>
</comment>
<feature type="chain" id="PRO_1000132881" description="V-type ATP synthase alpha chain">
    <location>
        <begin position="1"/>
        <end position="576"/>
    </location>
</feature>
<feature type="binding site" evidence="1">
    <location>
        <begin position="238"/>
        <end position="245"/>
    </location>
    <ligand>
        <name>ATP</name>
        <dbReference type="ChEBI" id="CHEBI:30616"/>
    </ligand>
</feature>
<accession>A1QYP3</accession>
<organism>
    <name type="scientific">Borrelia turicatae (strain 91E135)</name>
    <dbReference type="NCBI Taxonomy" id="314724"/>
    <lineage>
        <taxon>Bacteria</taxon>
        <taxon>Pseudomonadati</taxon>
        <taxon>Spirochaetota</taxon>
        <taxon>Spirochaetia</taxon>
        <taxon>Spirochaetales</taxon>
        <taxon>Borreliaceae</taxon>
        <taxon>Borrelia</taxon>
    </lineage>
</organism>
<gene>
    <name evidence="1" type="primary">atpA</name>
    <name type="ordered locus">BT0094</name>
</gene>